<comment type="similarity">
    <text evidence="1">Belongs to the universal ribosomal protein uS2 family.</text>
</comment>
<proteinExistence type="inferred from homology"/>
<dbReference type="EMBL" id="CP000577">
    <property type="protein sequence ID" value="ABN76543.1"/>
    <property type="molecule type" value="Genomic_DNA"/>
</dbReference>
<dbReference type="SMR" id="A3PJM7"/>
<dbReference type="KEGG" id="rsh:Rsph17029_1433"/>
<dbReference type="HOGENOM" id="CLU_040318_2_1_5"/>
<dbReference type="GO" id="GO:0022627">
    <property type="term" value="C:cytosolic small ribosomal subunit"/>
    <property type="evidence" value="ECO:0007669"/>
    <property type="project" value="TreeGrafter"/>
</dbReference>
<dbReference type="GO" id="GO:0003735">
    <property type="term" value="F:structural constituent of ribosome"/>
    <property type="evidence" value="ECO:0007669"/>
    <property type="project" value="InterPro"/>
</dbReference>
<dbReference type="GO" id="GO:0006412">
    <property type="term" value="P:translation"/>
    <property type="evidence" value="ECO:0007669"/>
    <property type="project" value="UniProtKB-UniRule"/>
</dbReference>
<dbReference type="CDD" id="cd01425">
    <property type="entry name" value="RPS2"/>
    <property type="match status" value="1"/>
</dbReference>
<dbReference type="FunFam" id="1.10.287.610:FF:000001">
    <property type="entry name" value="30S ribosomal protein S2"/>
    <property type="match status" value="1"/>
</dbReference>
<dbReference type="Gene3D" id="3.40.50.10490">
    <property type="entry name" value="Glucose-6-phosphate isomerase like protein, domain 1"/>
    <property type="match status" value="1"/>
</dbReference>
<dbReference type="Gene3D" id="1.10.287.610">
    <property type="entry name" value="Helix hairpin bin"/>
    <property type="match status" value="1"/>
</dbReference>
<dbReference type="HAMAP" id="MF_00291_B">
    <property type="entry name" value="Ribosomal_uS2_B"/>
    <property type="match status" value="1"/>
</dbReference>
<dbReference type="InterPro" id="IPR001865">
    <property type="entry name" value="Ribosomal_uS2"/>
</dbReference>
<dbReference type="InterPro" id="IPR005706">
    <property type="entry name" value="Ribosomal_uS2_bac/mit/plastid"/>
</dbReference>
<dbReference type="InterPro" id="IPR018130">
    <property type="entry name" value="Ribosomal_uS2_CS"/>
</dbReference>
<dbReference type="InterPro" id="IPR023591">
    <property type="entry name" value="Ribosomal_uS2_flav_dom_sf"/>
</dbReference>
<dbReference type="NCBIfam" id="TIGR01011">
    <property type="entry name" value="rpsB_bact"/>
    <property type="match status" value="1"/>
</dbReference>
<dbReference type="PANTHER" id="PTHR12534">
    <property type="entry name" value="30S RIBOSOMAL PROTEIN S2 PROKARYOTIC AND ORGANELLAR"/>
    <property type="match status" value="1"/>
</dbReference>
<dbReference type="PANTHER" id="PTHR12534:SF0">
    <property type="entry name" value="SMALL RIBOSOMAL SUBUNIT PROTEIN US2M"/>
    <property type="match status" value="1"/>
</dbReference>
<dbReference type="Pfam" id="PF00318">
    <property type="entry name" value="Ribosomal_S2"/>
    <property type="match status" value="1"/>
</dbReference>
<dbReference type="PRINTS" id="PR00395">
    <property type="entry name" value="RIBOSOMALS2"/>
</dbReference>
<dbReference type="SUPFAM" id="SSF52313">
    <property type="entry name" value="Ribosomal protein S2"/>
    <property type="match status" value="1"/>
</dbReference>
<dbReference type="PROSITE" id="PS00963">
    <property type="entry name" value="RIBOSOMAL_S2_2"/>
    <property type="match status" value="1"/>
</dbReference>
<accession>A3PJM7</accession>
<name>RS2_CERS1</name>
<organism>
    <name type="scientific">Cereibacter sphaeroides (strain ATCC 17029 / ATH 2.4.9)</name>
    <name type="common">Rhodobacter sphaeroides</name>
    <dbReference type="NCBI Taxonomy" id="349101"/>
    <lineage>
        <taxon>Bacteria</taxon>
        <taxon>Pseudomonadati</taxon>
        <taxon>Pseudomonadota</taxon>
        <taxon>Alphaproteobacteria</taxon>
        <taxon>Rhodobacterales</taxon>
        <taxon>Paracoccaceae</taxon>
        <taxon>Cereibacter</taxon>
    </lineage>
</organism>
<protein>
    <recommendedName>
        <fullName evidence="1">Small ribosomal subunit protein uS2</fullName>
    </recommendedName>
    <alternativeName>
        <fullName evidence="2">30S ribosomal protein S2</fullName>
    </alternativeName>
</protein>
<sequence>MALPEFSMRQLLEAGVHYGHQTARWNPKMAEFIYGDRNGIHIVDLTQTVPMLDQALKVVRDTVAKGGRILFVGTKRQAQKPIAEAAEKCAQHYMNHRWLGGTLTNWKTVSQSIQRLKQLDEVLATGAEGLTKKERLNMEREQQKLQASLGGIREMGGTPDLLFIIDVGKEDLAIAEAQKLGIPVVAVVDTNNSPKGVDYVIPGNDDAARAIALYCDLVSRAALDGMSAQMGAAGIDLGALDVAPEEETLEA</sequence>
<evidence type="ECO:0000255" key="1">
    <source>
        <dbReference type="HAMAP-Rule" id="MF_00291"/>
    </source>
</evidence>
<evidence type="ECO:0000305" key="2"/>
<reference key="1">
    <citation type="submission" date="2007-02" db="EMBL/GenBank/DDBJ databases">
        <title>Complete sequence of chromosome 1 of Rhodobacter sphaeroides ATCC 17029.</title>
        <authorList>
            <person name="Copeland A."/>
            <person name="Lucas S."/>
            <person name="Lapidus A."/>
            <person name="Barry K."/>
            <person name="Detter J.C."/>
            <person name="Glavina del Rio T."/>
            <person name="Hammon N."/>
            <person name="Israni S."/>
            <person name="Dalin E."/>
            <person name="Tice H."/>
            <person name="Pitluck S."/>
            <person name="Kiss H."/>
            <person name="Brettin T."/>
            <person name="Bruce D."/>
            <person name="Han C."/>
            <person name="Tapia R."/>
            <person name="Gilna P."/>
            <person name="Schmutz J."/>
            <person name="Larimer F."/>
            <person name="Land M."/>
            <person name="Hauser L."/>
            <person name="Kyrpides N."/>
            <person name="Mikhailova N."/>
            <person name="Richardson P."/>
            <person name="Mackenzie C."/>
            <person name="Choudhary M."/>
            <person name="Donohue T.J."/>
            <person name="Kaplan S."/>
        </authorList>
    </citation>
    <scope>NUCLEOTIDE SEQUENCE [LARGE SCALE GENOMIC DNA]</scope>
    <source>
        <strain>ATCC 17029 / ATH 2.4.9</strain>
    </source>
</reference>
<feature type="chain" id="PRO_1000004051" description="Small ribosomal subunit protein uS2">
    <location>
        <begin position="1"/>
        <end position="251"/>
    </location>
</feature>
<keyword id="KW-0687">Ribonucleoprotein</keyword>
<keyword id="KW-0689">Ribosomal protein</keyword>
<gene>
    <name evidence="1" type="primary">rpsB</name>
    <name type="ordered locus">Rsph17029_1433</name>
</gene>